<organism>
    <name type="scientific">Staphylococcus epidermidis (strain ATCC 12228 / FDA PCI 1200)</name>
    <dbReference type="NCBI Taxonomy" id="176280"/>
    <lineage>
        <taxon>Bacteria</taxon>
        <taxon>Bacillati</taxon>
        <taxon>Bacillota</taxon>
        <taxon>Bacilli</taxon>
        <taxon>Bacillales</taxon>
        <taxon>Staphylococcaceae</taxon>
        <taxon>Staphylococcus</taxon>
    </lineage>
</organism>
<dbReference type="EC" id="2.7.13.3"/>
<dbReference type="EMBL" id="AE015929">
    <property type="protein sequence ID" value="AAO04696.1"/>
    <property type="molecule type" value="Genomic_DNA"/>
</dbReference>
<dbReference type="RefSeq" id="NP_764654.1">
    <property type="nucleotide sequence ID" value="NC_004461.1"/>
</dbReference>
<dbReference type="RefSeq" id="WP_001831043.1">
    <property type="nucleotide sequence ID" value="NZ_WBME01000002.1"/>
</dbReference>
<dbReference type="SMR" id="Q8CSL7"/>
<dbReference type="KEGG" id="sep:SE_1099"/>
<dbReference type="PATRIC" id="fig|176280.10.peg.1074"/>
<dbReference type="eggNOG" id="COG5002">
    <property type="taxonomic scope" value="Bacteria"/>
</dbReference>
<dbReference type="HOGENOM" id="CLU_000445_89_6_9"/>
<dbReference type="OrthoDB" id="9786919at2"/>
<dbReference type="Proteomes" id="UP000001411">
    <property type="component" value="Chromosome"/>
</dbReference>
<dbReference type="GO" id="GO:0005886">
    <property type="term" value="C:plasma membrane"/>
    <property type="evidence" value="ECO:0007669"/>
    <property type="project" value="UniProtKB-SubCell"/>
</dbReference>
<dbReference type="GO" id="GO:0005524">
    <property type="term" value="F:ATP binding"/>
    <property type="evidence" value="ECO:0007669"/>
    <property type="project" value="UniProtKB-KW"/>
</dbReference>
<dbReference type="GO" id="GO:0000155">
    <property type="term" value="F:phosphorelay sensor kinase activity"/>
    <property type="evidence" value="ECO:0007669"/>
    <property type="project" value="InterPro"/>
</dbReference>
<dbReference type="CDD" id="cd00075">
    <property type="entry name" value="HATPase"/>
    <property type="match status" value="1"/>
</dbReference>
<dbReference type="CDD" id="cd00082">
    <property type="entry name" value="HisKA"/>
    <property type="match status" value="1"/>
</dbReference>
<dbReference type="FunFam" id="3.30.565.10:FF:000006">
    <property type="entry name" value="Sensor histidine kinase WalK"/>
    <property type="match status" value="1"/>
</dbReference>
<dbReference type="FunFam" id="1.10.287.130:FF:000001">
    <property type="entry name" value="Two-component sensor histidine kinase"/>
    <property type="match status" value="1"/>
</dbReference>
<dbReference type="Gene3D" id="1.10.287.130">
    <property type="match status" value="1"/>
</dbReference>
<dbReference type="Gene3D" id="6.10.340.10">
    <property type="match status" value="1"/>
</dbReference>
<dbReference type="Gene3D" id="3.30.565.10">
    <property type="entry name" value="Histidine kinase-like ATPase, C-terminal domain"/>
    <property type="match status" value="1"/>
</dbReference>
<dbReference type="InterPro" id="IPR041610">
    <property type="entry name" value="ArlS_N"/>
</dbReference>
<dbReference type="InterPro" id="IPR050398">
    <property type="entry name" value="Bact_Sensor_His_Kinase"/>
</dbReference>
<dbReference type="InterPro" id="IPR003660">
    <property type="entry name" value="HAMP_dom"/>
</dbReference>
<dbReference type="InterPro" id="IPR036890">
    <property type="entry name" value="HATPase_C_sf"/>
</dbReference>
<dbReference type="InterPro" id="IPR005467">
    <property type="entry name" value="His_kinase_dom"/>
</dbReference>
<dbReference type="InterPro" id="IPR003661">
    <property type="entry name" value="HisK_dim/P_dom"/>
</dbReference>
<dbReference type="InterPro" id="IPR036097">
    <property type="entry name" value="HisK_dim/P_sf"/>
</dbReference>
<dbReference type="InterPro" id="IPR004358">
    <property type="entry name" value="Sig_transdc_His_kin-like_C"/>
</dbReference>
<dbReference type="PANTHER" id="PTHR45528:SF12">
    <property type="entry name" value="SENSOR HISTIDINE KINASE ARSS"/>
    <property type="match status" value="1"/>
</dbReference>
<dbReference type="PANTHER" id="PTHR45528">
    <property type="entry name" value="SENSOR HISTIDINE KINASE CPXA"/>
    <property type="match status" value="1"/>
</dbReference>
<dbReference type="Pfam" id="PF18719">
    <property type="entry name" value="ArlS_N"/>
    <property type="match status" value="1"/>
</dbReference>
<dbReference type="Pfam" id="PF02518">
    <property type="entry name" value="HATPase_c"/>
    <property type="match status" value="1"/>
</dbReference>
<dbReference type="Pfam" id="PF00512">
    <property type="entry name" value="HisKA"/>
    <property type="match status" value="1"/>
</dbReference>
<dbReference type="PRINTS" id="PR00344">
    <property type="entry name" value="BCTRLSENSOR"/>
</dbReference>
<dbReference type="SMART" id="SM00387">
    <property type="entry name" value="HATPase_c"/>
    <property type="match status" value="1"/>
</dbReference>
<dbReference type="SMART" id="SM00388">
    <property type="entry name" value="HisKA"/>
    <property type="match status" value="1"/>
</dbReference>
<dbReference type="SUPFAM" id="SSF55874">
    <property type="entry name" value="ATPase domain of HSP90 chaperone/DNA topoisomerase II/histidine kinase"/>
    <property type="match status" value="1"/>
</dbReference>
<dbReference type="SUPFAM" id="SSF158472">
    <property type="entry name" value="HAMP domain-like"/>
    <property type="match status" value="1"/>
</dbReference>
<dbReference type="SUPFAM" id="SSF47384">
    <property type="entry name" value="Homodimeric domain of signal transducing histidine kinase"/>
    <property type="match status" value="1"/>
</dbReference>
<dbReference type="PROSITE" id="PS50885">
    <property type="entry name" value="HAMP"/>
    <property type="match status" value="1"/>
</dbReference>
<dbReference type="PROSITE" id="PS50109">
    <property type="entry name" value="HIS_KIN"/>
    <property type="match status" value="1"/>
</dbReference>
<evidence type="ECO:0000250" key="1"/>
<evidence type="ECO:0000255" key="2"/>
<evidence type="ECO:0000255" key="3">
    <source>
        <dbReference type="PROSITE-ProRule" id="PRU00102"/>
    </source>
</evidence>
<evidence type="ECO:0000255" key="4">
    <source>
        <dbReference type="PROSITE-ProRule" id="PRU00107"/>
    </source>
</evidence>
<name>ARLS_STAES</name>
<comment type="function">
    <text evidence="1">Member of the two-component regulatory system ArlS/ArlR. ArlS probably functions as a sensor protein kinase which is autophosphorylated at a histidine residue and transfers its phosphate group to ArlR (By similarity).</text>
</comment>
<comment type="catalytic activity">
    <reaction>
        <text>ATP + protein L-histidine = ADP + protein N-phospho-L-histidine.</text>
        <dbReference type="EC" id="2.7.13.3"/>
    </reaction>
</comment>
<comment type="subcellular location">
    <subcellularLocation>
        <location evidence="1">Cell membrane</location>
        <topology evidence="1">Multi-pass membrane protein</topology>
    </subcellularLocation>
</comment>
<comment type="PTM">
    <text evidence="1">Autophosphorylated.</text>
</comment>
<gene>
    <name type="primary">arlS</name>
    <name type="ordered locus">SE_1099</name>
</gene>
<proteinExistence type="inferred from homology"/>
<keyword id="KW-0067">ATP-binding</keyword>
<keyword id="KW-1003">Cell membrane</keyword>
<keyword id="KW-0418">Kinase</keyword>
<keyword id="KW-0472">Membrane</keyword>
<keyword id="KW-0547">Nucleotide-binding</keyword>
<keyword id="KW-0597">Phosphoprotein</keyword>
<keyword id="KW-0808">Transferase</keyword>
<keyword id="KW-0812">Transmembrane</keyword>
<keyword id="KW-1133">Transmembrane helix</keyword>
<keyword id="KW-0902">Two-component regulatory system</keyword>
<sequence>MIKRQKLKYKWMLITTLITFTTILLFCLIIIFFLKDTLRSSEIDEAERSSNDIANLFHSKSLSDISALDLNASLENFQEILIYDDKGRKLIQTSNDNTLAYDNKIDFKHPERIHIQRSHGINYLVITEPIRSKDFSGYSVLVHSLQNYDNLVKSLYIVALAFGLIATIITAGVSYIFSSQITKPIVTMSNKMNQIRRDGFQNKLELTTNYEETDNLIDTFNEMMYQIEESFNQQRQFVEDASHELRTPLQIIQGHLNLIQRWGKKDPAVLEESLNISIEEVNRITKLVEELLLLTKDRVNHNVLECENVDVNSEIQSRVKSLQHLHPDYTFETHLATKPIQLKINRHQFEQLLLIFIDNAMKYDTEHKHIKIVTQLKNKMIMIDITDHGMGIPKADLEFIFDRFYRVDKSRARSQGGNGLGLSIAEKIVQLNGGMIQVESELQKYTTFKISFPVLN</sequence>
<reference key="1">
    <citation type="journal article" date="2003" name="Mol. Microbiol.">
        <title>Genome-based analysis of virulence genes in a non-biofilm-forming Staphylococcus epidermidis strain (ATCC 12228).</title>
        <authorList>
            <person name="Zhang Y.-Q."/>
            <person name="Ren S.-X."/>
            <person name="Li H.-L."/>
            <person name="Wang Y.-X."/>
            <person name="Fu G."/>
            <person name="Yang J."/>
            <person name="Qin Z.-Q."/>
            <person name="Miao Y.-G."/>
            <person name="Wang W.-Y."/>
            <person name="Chen R.-S."/>
            <person name="Shen Y."/>
            <person name="Chen Z."/>
            <person name="Yuan Z.-H."/>
            <person name="Zhao G.-P."/>
            <person name="Qu D."/>
            <person name="Danchin A."/>
            <person name="Wen Y.-M."/>
        </authorList>
    </citation>
    <scope>NUCLEOTIDE SEQUENCE [LARGE SCALE GENOMIC DNA]</scope>
    <source>
        <strain>ATCC 12228 / FDA PCI 1200</strain>
    </source>
</reference>
<protein>
    <recommendedName>
        <fullName>Signal transduction histidine-protein kinase ArlS</fullName>
        <ecNumber>2.7.13.3</ecNumber>
    </recommendedName>
</protein>
<feature type="chain" id="PRO_0000293449" description="Signal transduction histidine-protein kinase ArlS">
    <location>
        <begin position="1"/>
        <end position="456"/>
    </location>
</feature>
<feature type="transmembrane region" description="Helical" evidence="2">
    <location>
        <begin position="13"/>
        <end position="33"/>
    </location>
</feature>
<feature type="transmembrane region" description="Helical" evidence="2">
    <location>
        <begin position="157"/>
        <end position="177"/>
    </location>
</feature>
<feature type="domain" description="HAMP" evidence="3">
    <location>
        <begin position="179"/>
        <end position="232"/>
    </location>
</feature>
<feature type="domain" description="Histidine kinase" evidence="4">
    <location>
        <begin position="240"/>
        <end position="456"/>
    </location>
</feature>
<feature type="modified residue" description="Phosphohistidine; by autocatalysis" evidence="4">
    <location>
        <position position="243"/>
    </location>
</feature>
<accession>Q8CSL7</accession>